<sequence>MTTICAVKHNGKTAIAGDGQVTLGEKVIMKGSARKVRRIYNDKVAVGFAGGVADAINLEEKFENKLNEYSGNLERAAVELAQEWRGDRTLQKLEAMLIVIDKDNLLIVSGSGEVIVPDNGVLAIGSGGNYAQAAAVALSEYSKDMSAGEIAKAALNIAADIDIFTNHNIIVEELA</sequence>
<keyword id="KW-0021">Allosteric enzyme</keyword>
<keyword id="KW-0963">Cytoplasm</keyword>
<keyword id="KW-0378">Hydrolase</keyword>
<keyword id="KW-0479">Metal-binding</keyword>
<keyword id="KW-0645">Protease</keyword>
<keyword id="KW-1185">Reference proteome</keyword>
<keyword id="KW-0915">Sodium</keyword>
<keyword id="KW-0888">Threonine protease</keyword>
<organism>
    <name type="scientific">Ligilactobacillus salivarius (strain UCC118)</name>
    <name type="common">Lactobacillus salivarius</name>
    <dbReference type="NCBI Taxonomy" id="362948"/>
    <lineage>
        <taxon>Bacteria</taxon>
        <taxon>Bacillati</taxon>
        <taxon>Bacillota</taxon>
        <taxon>Bacilli</taxon>
        <taxon>Lactobacillales</taxon>
        <taxon>Lactobacillaceae</taxon>
        <taxon>Ligilactobacillus</taxon>
    </lineage>
</organism>
<proteinExistence type="inferred from homology"/>
<reference key="1">
    <citation type="journal article" date="2006" name="Proc. Natl. Acad. Sci. U.S.A.">
        <title>Multireplicon genome architecture of Lactobacillus salivarius.</title>
        <authorList>
            <person name="Claesson M.J."/>
            <person name="Li Y."/>
            <person name="Leahy S."/>
            <person name="Canchaya C."/>
            <person name="van Pijkeren J.P."/>
            <person name="Cerdeno-Tarraga A.M."/>
            <person name="Parkhill J."/>
            <person name="Flynn S."/>
            <person name="O'Sullivan G.C."/>
            <person name="Collins J.K."/>
            <person name="Higgins D."/>
            <person name="Shanahan F."/>
            <person name="Fitzgerald G.F."/>
            <person name="van Sinderen D."/>
            <person name="O'Toole P.W."/>
        </authorList>
    </citation>
    <scope>NUCLEOTIDE SEQUENCE [LARGE SCALE GENOMIC DNA]</scope>
    <source>
        <strain>UCC118</strain>
    </source>
</reference>
<accession>Q1WTI9</accession>
<evidence type="ECO:0000255" key="1">
    <source>
        <dbReference type="HAMAP-Rule" id="MF_00248"/>
    </source>
</evidence>
<name>HSLV_LIGS1</name>
<gene>
    <name evidence="1" type="primary">hslV</name>
    <name type="ordered locus">LSL_0947</name>
</gene>
<comment type="function">
    <text evidence="1">Protease subunit of a proteasome-like degradation complex believed to be a general protein degrading machinery.</text>
</comment>
<comment type="catalytic activity">
    <reaction evidence="1">
        <text>ATP-dependent cleavage of peptide bonds with broad specificity.</text>
        <dbReference type="EC" id="3.4.25.2"/>
    </reaction>
</comment>
<comment type="activity regulation">
    <text evidence="1">Allosterically activated by HslU binding.</text>
</comment>
<comment type="subunit">
    <text evidence="1">A double ring-shaped homohexamer of HslV is capped on each side by a ring-shaped HslU homohexamer. The assembly of the HslU/HslV complex is dependent on binding of ATP.</text>
</comment>
<comment type="subcellular location">
    <subcellularLocation>
        <location evidence="1">Cytoplasm</location>
    </subcellularLocation>
</comment>
<comment type="similarity">
    <text evidence="1">Belongs to the peptidase T1B family. HslV subfamily.</text>
</comment>
<dbReference type="EC" id="3.4.25.2" evidence="1"/>
<dbReference type="EMBL" id="CP000233">
    <property type="protein sequence ID" value="ABD99757.1"/>
    <property type="molecule type" value="Genomic_DNA"/>
</dbReference>
<dbReference type="RefSeq" id="WP_011476065.1">
    <property type="nucleotide sequence ID" value="NC_007929.1"/>
</dbReference>
<dbReference type="RefSeq" id="YP_535840.1">
    <property type="nucleotide sequence ID" value="NC_007929.1"/>
</dbReference>
<dbReference type="SMR" id="Q1WTI9"/>
<dbReference type="STRING" id="362948.LSL_0947"/>
<dbReference type="MEROPS" id="T01.007"/>
<dbReference type="KEGG" id="lsl:LSL_0947"/>
<dbReference type="PATRIC" id="fig|362948.14.peg.1022"/>
<dbReference type="HOGENOM" id="CLU_093872_1_1_9"/>
<dbReference type="OrthoDB" id="9804884at2"/>
<dbReference type="Proteomes" id="UP000006559">
    <property type="component" value="Chromosome"/>
</dbReference>
<dbReference type="GO" id="GO:0009376">
    <property type="term" value="C:HslUV protease complex"/>
    <property type="evidence" value="ECO:0007669"/>
    <property type="project" value="UniProtKB-UniRule"/>
</dbReference>
<dbReference type="GO" id="GO:0005839">
    <property type="term" value="C:proteasome core complex"/>
    <property type="evidence" value="ECO:0007669"/>
    <property type="project" value="InterPro"/>
</dbReference>
<dbReference type="GO" id="GO:0046872">
    <property type="term" value="F:metal ion binding"/>
    <property type="evidence" value="ECO:0007669"/>
    <property type="project" value="UniProtKB-KW"/>
</dbReference>
<dbReference type="GO" id="GO:0004298">
    <property type="term" value="F:threonine-type endopeptidase activity"/>
    <property type="evidence" value="ECO:0007669"/>
    <property type="project" value="UniProtKB-KW"/>
</dbReference>
<dbReference type="GO" id="GO:0051603">
    <property type="term" value="P:proteolysis involved in protein catabolic process"/>
    <property type="evidence" value="ECO:0007669"/>
    <property type="project" value="InterPro"/>
</dbReference>
<dbReference type="CDD" id="cd01913">
    <property type="entry name" value="protease_HslV"/>
    <property type="match status" value="1"/>
</dbReference>
<dbReference type="Gene3D" id="3.60.20.10">
    <property type="entry name" value="Glutamine Phosphoribosylpyrophosphate, subunit 1, domain 1"/>
    <property type="match status" value="1"/>
</dbReference>
<dbReference type="HAMAP" id="MF_00248">
    <property type="entry name" value="HslV"/>
    <property type="match status" value="1"/>
</dbReference>
<dbReference type="InterPro" id="IPR022281">
    <property type="entry name" value="ATP-dep_Prtase_HsIV_su"/>
</dbReference>
<dbReference type="InterPro" id="IPR029055">
    <property type="entry name" value="Ntn_hydrolases_N"/>
</dbReference>
<dbReference type="InterPro" id="IPR001353">
    <property type="entry name" value="Proteasome_sua/b"/>
</dbReference>
<dbReference type="InterPro" id="IPR023333">
    <property type="entry name" value="Proteasome_suB-type"/>
</dbReference>
<dbReference type="NCBIfam" id="TIGR03692">
    <property type="entry name" value="ATP_dep_HslV"/>
    <property type="match status" value="1"/>
</dbReference>
<dbReference type="NCBIfam" id="NF003964">
    <property type="entry name" value="PRK05456.1"/>
    <property type="match status" value="1"/>
</dbReference>
<dbReference type="PANTHER" id="PTHR32194:SF0">
    <property type="entry name" value="ATP-DEPENDENT PROTEASE SUBUNIT HSLV"/>
    <property type="match status" value="1"/>
</dbReference>
<dbReference type="PANTHER" id="PTHR32194">
    <property type="entry name" value="METALLOPROTEASE TLDD"/>
    <property type="match status" value="1"/>
</dbReference>
<dbReference type="Pfam" id="PF00227">
    <property type="entry name" value="Proteasome"/>
    <property type="match status" value="1"/>
</dbReference>
<dbReference type="SUPFAM" id="SSF56235">
    <property type="entry name" value="N-terminal nucleophile aminohydrolases (Ntn hydrolases)"/>
    <property type="match status" value="1"/>
</dbReference>
<dbReference type="PROSITE" id="PS51476">
    <property type="entry name" value="PROTEASOME_BETA_2"/>
    <property type="match status" value="1"/>
</dbReference>
<protein>
    <recommendedName>
        <fullName evidence="1">ATP-dependent protease subunit HslV</fullName>
        <ecNumber evidence="1">3.4.25.2</ecNumber>
    </recommendedName>
</protein>
<feature type="chain" id="PRO_0000336777" description="ATP-dependent protease subunit HslV">
    <location>
        <begin position="1"/>
        <end position="175"/>
    </location>
</feature>
<feature type="active site" evidence="1">
    <location>
        <position position="2"/>
    </location>
</feature>
<feature type="binding site" evidence="1">
    <location>
        <position position="159"/>
    </location>
    <ligand>
        <name>Na(+)</name>
        <dbReference type="ChEBI" id="CHEBI:29101"/>
    </ligand>
</feature>
<feature type="binding site" evidence="1">
    <location>
        <position position="162"/>
    </location>
    <ligand>
        <name>Na(+)</name>
        <dbReference type="ChEBI" id="CHEBI:29101"/>
    </ligand>
</feature>
<feature type="binding site" evidence="1">
    <location>
        <position position="165"/>
    </location>
    <ligand>
        <name>Na(+)</name>
        <dbReference type="ChEBI" id="CHEBI:29101"/>
    </ligand>
</feature>